<sequence length="248" mass="27024">MAGHSQFKNIMHRKGRQDAVRSKMFSKLGREITVAAKQGLPDPTMNPRLRLAIQNAKAQSMPKDNIERAIKKAAGNDGENYDEVRYEGRGPGGVSVIVEALTDNRNRTASNVRAAFTKSGGALGETGSVSFMFDRVGEIVYKSSVGDADKVMEAAIEAGADDVQSGEEEHVIICAFEDIGEVSKALEAALGEAESIKTIWKPQTNTELDEEKARSVLKLLNVLEDDDDVQNVYTNFEVSDEVMEKLSA</sequence>
<name>Y1200_BRUA4</name>
<dbReference type="EMBL" id="CP000758">
    <property type="protein sequence ID" value="ABS13917.1"/>
    <property type="molecule type" value="Genomic_DNA"/>
</dbReference>
<dbReference type="RefSeq" id="WP_010661390.1">
    <property type="nucleotide sequence ID" value="NC_009667.1"/>
</dbReference>
<dbReference type="SMR" id="A6WY63"/>
<dbReference type="STRING" id="439375.Oant_1200"/>
<dbReference type="KEGG" id="oan:Oant_1200"/>
<dbReference type="eggNOG" id="COG0217">
    <property type="taxonomic scope" value="Bacteria"/>
</dbReference>
<dbReference type="HOGENOM" id="CLU_062974_2_2_5"/>
<dbReference type="Proteomes" id="UP000002301">
    <property type="component" value="Chromosome 1"/>
</dbReference>
<dbReference type="GO" id="GO:0005829">
    <property type="term" value="C:cytosol"/>
    <property type="evidence" value="ECO:0007669"/>
    <property type="project" value="TreeGrafter"/>
</dbReference>
<dbReference type="GO" id="GO:0003677">
    <property type="term" value="F:DNA binding"/>
    <property type="evidence" value="ECO:0007669"/>
    <property type="project" value="UniProtKB-UniRule"/>
</dbReference>
<dbReference type="GO" id="GO:0006355">
    <property type="term" value="P:regulation of DNA-templated transcription"/>
    <property type="evidence" value="ECO:0007669"/>
    <property type="project" value="UniProtKB-UniRule"/>
</dbReference>
<dbReference type="FunFam" id="1.10.10.200:FF:000002">
    <property type="entry name" value="Probable transcriptional regulatory protein CLM62_37755"/>
    <property type="match status" value="1"/>
</dbReference>
<dbReference type="Gene3D" id="1.10.10.200">
    <property type="match status" value="1"/>
</dbReference>
<dbReference type="Gene3D" id="3.30.70.980">
    <property type="match status" value="2"/>
</dbReference>
<dbReference type="HAMAP" id="MF_00693">
    <property type="entry name" value="Transcrip_reg_TACO1"/>
    <property type="match status" value="1"/>
</dbReference>
<dbReference type="InterPro" id="IPR017856">
    <property type="entry name" value="Integrase-like_N"/>
</dbReference>
<dbReference type="InterPro" id="IPR048300">
    <property type="entry name" value="TACO1_YebC-like_2nd/3rd_dom"/>
</dbReference>
<dbReference type="InterPro" id="IPR049083">
    <property type="entry name" value="TACO1_YebC_N"/>
</dbReference>
<dbReference type="InterPro" id="IPR002876">
    <property type="entry name" value="Transcrip_reg_TACO1-like"/>
</dbReference>
<dbReference type="InterPro" id="IPR026564">
    <property type="entry name" value="Transcrip_reg_TACO1-like_dom3"/>
</dbReference>
<dbReference type="InterPro" id="IPR029072">
    <property type="entry name" value="YebC-like"/>
</dbReference>
<dbReference type="NCBIfam" id="NF001030">
    <property type="entry name" value="PRK00110.1"/>
    <property type="match status" value="1"/>
</dbReference>
<dbReference type="NCBIfam" id="NF009044">
    <property type="entry name" value="PRK12378.1"/>
    <property type="match status" value="1"/>
</dbReference>
<dbReference type="NCBIfam" id="TIGR01033">
    <property type="entry name" value="YebC/PmpR family DNA-binding transcriptional regulator"/>
    <property type="match status" value="1"/>
</dbReference>
<dbReference type="PANTHER" id="PTHR12532:SF6">
    <property type="entry name" value="TRANSCRIPTIONAL REGULATORY PROTEIN YEBC-RELATED"/>
    <property type="match status" value="1"/>
</dbReference>
<dbReference type="PANTHER" id="PTHR12532">
    <property type="entry name" value="TRANSLATIONAL ACTIVATOR OF CYTOCHROME C OXIDASE 1"/>
    <property type="match status" value="1"/>
</dbReference>
<dbReference type="Pfam" id="PF20772">
    <property type="entry name" value="TACO1_YebC_N"/>
    <property type="match status" value="1"/>
</dbReference>
<dbReference type="Pfam" id="PF01709">
    <property type="entry name" value="Transcrip_reg"/>
    <property type="match status" value="1"/>
</dbReference>
<dbReference type="SUPFAM" id="SSF75625">
    <property type="entry name" value="YebC-like"/>
    <property type="match status" value="1"/>
</dbReference>
<accession>A6WY63</accession>
<protein>
    <recommendedName>
        <fullName evidence="1">Probable transcriptional regulatory protein Oant_1200</fullName>
    </recommendedName>
</protein>
<gene>
    <name type="ordered locus">Oant_1200</name>
</gene>
<proteinExistence type="inferred from homology"/>
<comment type="subcellular location">
    <subcellularLocation>
        <location evidence="1">Cytoplasm</location>
    </subcellularLocation>
</comment>
<comment type="similarity">
    <text evidence="1">Belongs to the TACO1 family.</text>
</comment>
<feature type="chain" id="PRO_1000045349" description="Probable transcriptional regulatory protein Oant_1200">
    <location>
        <begin position="1"/>
        <end position="248"/>
    </location>
</feature>
<evidence type="ECO:0000255" key="1">
    <source>
        <dbReference type="HAMAP-Rule" id="MF_00693"/>
    </source>
</evidence>
<reference key="1">
    <citation type="journal article" date="2011" name="J. Bacteriol.">
        <title>Genome of Ochrobactrum anthropi ATCC 49188 T, a versatile opportunistic pathogen and symbiont of several eukaryotic hosts.</title>
        <authorList>
            <person name="Chain P.S."/>
            <person name="Lang D.M."/>
            <person name="Comerci D.J."/>
            <person name="Malfatti S.A."/>
            <person name="Vergez L.M."/>
            <person name="Shin M."/>
            <person name="Ugalde R.A."/>
            <person name="Garcia E."/>
            <person name="Tolmasky M.E."/>
        </authorList>
    </citation>
    <scope>NUCLEOTIDE SEQUENCE [LARGE SCALE GENOMIC DNA]</scope>
    <source>
        <strain>ATCC 49188 / DSM 6882 / CCUG 24695 / JCM 21032 / LMG 3331 / NBRC 15819 / NCTC 12168 / Alc 37</strain>
    </source>
</reference>
<organism>
    <name type="scientific">Brucella anthropi (strain ATCC 49188 / DSM 6882 / CCUG 24695 / JCM 21032 / LMG 3331 / NBRC 15819 / NCTC 12168 / Alc 37)</name>
    <name type="common">Ochrobactrum anthropi</name>
    <dbReference type="NCBI Taxonomy" id="439375"/>
    <lineage>
        <taxon>Bacteria</taxon>
        <taxon>Pseudomonadati</taxon>
        <taxon>Pseudomonadota</taxon>
        <taxon>Alphaproteobacteria</taxon>
        <taxon>Hyphomicrobiales</taxon>
        <taxon>Brucellaceae</taxon>
        <taxon>Brucella/Ochrobactrum group</taxon>
        <taxon>Brucella</taxon>
    </lineage>
</organism>
<keyword id="KW-0963">Cytoplasm</keyword>
<keyword id="KW-0238">DNA-binding</keyword>
<keyword id="KW-1185">Reference proteome</keyword>
<keyword id="KW-0804">Transcription</keyword>
<keyword id="KW-0805">Transcription regulation</keyword>